<proteinExistence type="inferred from homology"/>
<name>PANC_GEOSW</name>
<gene>
    <name evidence="1" type="primary">panC</name>
    <name type="ordered locus">GWCH70_2117</name>
</gene>
<dbReference type="EC" id="6.3.2.1" evidence="1"/>
<dbReference type="EMBL" id="CP001638">
    <property type="protein sequence ID" value="ACS24827.1"/>
    <property type="molecule type" value="Genomic_DNA"/>
</dbReference>
<dbReference type="SMR" id="C5D3B2"/>
<dbReference type="STRING" id="471223.GWCH70_2117"/>
<dbReference type="KEGG" id="gwc:GWCH70_2117"/>
<dbReference type="eggNOG" id="COG0414">
    <property type="taxonomic scope" value="Bacteria"/>
</dbReference>
<dbReference type="HOGENOM" id="CLU_047148_0_0_9"/>
<dbReference type="OrthoDB" id="9773087at2"/>
<dbReference type="UniPathway" id="UPA00028">
    <property type="reaction ID" value="UER00005"/>
</dbReference>
<dbReference type="GO" id="GO:0005829">
    <property type="term" value="C:cytosol"/>
    <property type="evidence" value="ECO:0007669"/>
    <property type="project" value="TreeGrafter"/>
</dbReference>
<dbReference type="GO" id="GO:0005524">
    <property type="term" value="F:ATP binding"/>
    <property type="evidence" value="ECO:0007669"/>
    <property type="project" value="UniProtKB-KW"/>
</dbReference>
<dbReference type="GO" id="GO:0004592">
    <property type="term" value="F:pantoate-beta-alanine ligase activity"/>
    <property type="evidence" value="ECO:0007669"/>
    <property type="project" value="UniProtKB-UniRule"/>
</dbReference>
<dbReference type="GO" id="GO:0015940">
    <property type="term" value="P:pantothenate biosynthetic process"/>
    <property type="evidence" value="ECO:0007669"/>
    <property type="project" value="UniProtKB-UniRule"/>
</dbReference>
<dbReference type="CDD" id="cd00560">
    <property type="entry name" value="PanC"/>
    <property type="match status" value="1"/>
</dbReference>
<dbReference type="FunFam" id="3.30.1300.10:FF:000001">
    <property type="entry name" value="Pantothenate synthetase"/>
    <property type="match status" value="1"/>
</dbReference>
<dbReference type="FunFam" id="3.40.50.620:FF:000013">
    <property type="entry name" value="Pantothenate synthetase"/>
    <property type="match status" value="1"/>
</dbReference>
<dbReference type="Gene3D" id="3.40.50.620">
    <property type="entry name" value="HUPs"/>
    <property type="match status" value="1"/>
</dbReference>
<dbReference type="Gene3D" id="3.30.1300.10">
    <property type="entry name" value="Pantoate-beta-alanine ligase, C-terminal domain"/>
    <property type="match status" value="1"/>
</dbReference>
<dbReference type="HAMAP" id="MF_00158">
    <property type="entry name" value="PanC"/>
    <property type="match status" value="1"/>
</dbReference>
<dbReference type="InterPro" id="IPR004821">
    <property type="entry name" value="Cyt_trans-like"/>
</dbReference>
<dbReference type="InterPro" id="IPR003721">
    <property type="entry name" value="Pantoate_ligase"/>
</dbReference>
<dbReference type="InterPro" id="IPR042176">
    <property type="entry name" value="Pantoate_ligase_C"/>
</dbReference>
<dbReference type="InterPro" id="IPR014729">
    <property type="entry name" value="Rossmann-like_a/b/a_fold"/>
</dbReference>
<dbReference type="NCBIfam" id="TIGR00125">
    <property type="entry name" value="cyt_tran_rel"/>
    <property type="match status" value="1"/>
</dbReference>
<dbReference type="NCBIfam" id="TIGR00018">
    <property type="entry name" value="panC"/>
    <property type="match status" value="1"/>
</dbReference>
<dbReference type="PANTHER" id="PTHR21299">
    <property type="entry name" value="CYTIDYLATE KINASE/PANTOATE-BETA-ALANINE LIGASE"/>
    <property type="match status" value="1"/>
</dbReference>
<dbReference type="PANTHER" id="PTHR21299:SF1">
    <property type="entry name" value="PANTOATE--BETA-ALANINE LIGASE"/>
    <property type="match status" value="1"/>
</dbReference>
<dbReference type="Pfam" id="PF02569">
    <property type="entry name" value="Pantoate_ligase"/>
    <property type="match status" value="1"/>
</dbReference>
<dbReference type="SUPFAM" id="SSF52374">
    <property type="entry name" value="Nucleotidylyl transferase"/>
    <property type="match status" value="1"/>
</dbReference>
<keyword id="KW-0067">ATP-binding</keyword>
<keyword id="KW-0963">Cytoplasm</keyword>
<keyword id="KW-0436">Ligase</keyword>
<keyword id="KW-0547">Nucleotide-binding</keyword>
<keyword id="KW-0566">Pantothenate biosynthesis</keyword>
<organism>
    <name type="scientific">Geobacillus sp. (strain WCH70)</name>
    <dbReference type="NCBI Taxonomy" id="471223"/>
    <lineage>
        <taxon>Bacteria</taxon>
        <taxon>Bacillati</taxon>
        <taxon>Bacillota</taxon>
        <taxon>Bacilli</taxon>
        <taxon>Bacillales</taxon>
        <taxon>Anoxybacillaceae</taxon>
        <taxon>Geobacillus</taxon>
    </lineage>
</organism>
<accession>C5D3B2</accession>
<comment type="function">
    <text evidence="1">Catalyzes the condensation of pantoate with beta-alanine in an ATP-dependent reaction via a pantoyl-adenylate intermediate.</text>
</comment>
<comment type="catalytic activity">
    <reaction evidence="1">
        <text>(R)-pantoate + beta-alanine + ATP = (R)-pantothenate + AMP + diphosphate + H(+)</text>
        <dbReference type="Rhea" id="RHEA:10912"/>
        <dbReference type="ChEBI" id="CHEBI:15378"/>
        <dbReference type="ChEBI" id="CHEBI:15980"/>
        <dbReference type="ChEBI" id="CHEBI:29032"/>
        <dbReference type="ChEBI" id="CHEBI:30616"/>
        <dbReference type="ChEBI" id="CHEBI:33019"/>
        <dbReference type="ChEBI" id="CHEBI:57966"/>
        <dbReference type="ChEBI" id="CHEBI:456215"/>
        <dbReference type="EC" id="6.3.2.1"/>
    </reaction>
</comment>
<comment type="pathway">
    <text evidence="1">Cofactor biosynthesis; (R)-pantothenate biosynthesis; (R)-pantothenate from (R)-pantoate and beta-alanine: step 1/1.</text>
</comment>
<comment type="subunit">
    <text evidence="1">Homodimer.</text>
</comment>
<comment type="subcellular location">
    <subcellularLocation>
        <location evidence="1">Cytoplasm</location>
    </subcellularLocation>
</comment>
<comment type="miscellaneous">
    <text evidence="1">The reaction proceeds by a bi uni uni bi ping pong mechanism.</text>
</comment>
<comment type="similarity">
    <text evidence="1">Belongs to the pantothenate synthetase family.</text>
</comment>
<feature type="chain" id="PRO_1000203493" description="Pantothenate synthetase">
    <location>
        <begin position="1"/>
        <end position="282"/>
    </location>
</feature>
<feature type="active site" description="Proton donor" evidence="1">
    <location>
        <position position="37"/>
    </location>
</feature>
<feature type="binding site" evidence="1">
    <location>
        <begin position="30"/>
        <end position="37"/>
    </location>
    <ligand>
        <name>ATP</name>
        <dbReference type="ChEBI" id="CHEBI:30616"/>
    </ligand>
</feature>
<feature type="binding site" evidence="1">
    <location>
        <position position="61"/>
    </location>
    <ligand>
        <name>(R)-pantoate</name>
        <dbReference type="ChEBI" id="CHEBI:15980"/>
    </ligand>
</feature>
<feature type="binding site" evidence="1">
    <location>
        <position position="61"/>
    </location>
    <ligand>
        <name>beta-alanine</name>
        <dbReference type="ChEBI" id="CHEBI:57966"/>
    </ligand>
</feature>
<feature type="binding site" evidence="1">
    <location>
        <begin position="147"/>
        <end position="150"/>
    </location>
    <ligand>
        <name>ATP</name>
        <dbReference type="ChEBI" id="CHEBI:30616"/>
    </ligand>
</feature>
<feature type="binding site" evidence="1">
    <location>
        <position position="153"/>
    </location>
    <ligand>
        <name>(R)-pantoate</name>
        <dbReference type="ChEBI" id="CHEBI:15980"/>
    </ligand>
</feature>
<feature type="binding site" evidence="1">
    <location>
        <position position="176"/>
    </location>
    <ligand>
        <name>ATP</name>
        <dbReference type="ChEBI" id="CHEBI:30616"/>
    </ligand>
</feature>
<feature type="binding site" evidence="1">
    <location>
        <begin position="184"/>
        <end position="187"/>
    </location>
    <ligand>
        <name>ATP</name>
        <dbReference type="ChEBI" id="CHEBI:30616"/>
    </ligand>
</feature>
<sequence length="282" mass="31928">MIVTTKIQDMQTMMQQYRLEGKTIGFVPTMGYLHEGHIALLKKAREENDIVALSVFVNPLQFGPNEDFARYPRDIERDERIAKENGVDVFFCPSVEEMYPHPLSVQVTVKERVDVLCGKSRPGHFDGVATVLTKLFHIVMPTRAYFGMKDAQQVAVVDGLIRDFHFPIELVAVPTVREEDGLAKSSRNVYLSPEERKEAPALYQALQQAKTAIENGERNPETICALVKNYIQTHTHAEIDYVEVYSYPDLKPLEKLHGKVIIAVAVRFASARLIDNITLDIV</sequence>
<evidence type="ECO:0000255" key="1">
    <source>
        <dbReference type="HAMAP-Rule" id="MF_00158"/>
    </source>
</evidence>
<protein>
    <recommendedName>
        <fullName evidence="1">Pantothenate synthetase</fullName>
        <shortName evidence="1">PS</shortName>
        <ecNumber evidence="1">6.3.2.1</ecNumber>
    </recommendedName>
    <alternativeName>
        <fullName evidence="1">Pantoate--beta-alanine ligase</fullName>
    </alternativeName>
    <alternativeName>
        <fullName evidence="1">Pantoate-activating enzyme</fullName>
    </alternativeName>
</protein>
<reference key="1">
    <citation type="submission" date="2009-06" db="EMBL/GenBank/DDBJ databases">
        <title>Complete sequence of chromosome of Geopacillus sp. WCH70.</title>
        <authorList>
            <consortium name="US DOE Joint Genome Institute"/>
            <person name="Lucas S."/>
            <person name="Copeland A."/>
            <person name="Lapidus A."/>
            <person name="Glavina del Rio T."/>
            <person name="Dalin E."/>
            <person name="Tice H."/>
            <person name="Bruce D."/>
            <person name="Goodwin L."/>
            <person name="Pitluck S."/>
            <person name="Chertkov O."/>
            <person name="Brettin T."/>
            <person name="Detter J.C."/>
            <person name="Han C."/>
            <person name="Larimer F."/>
            <person name="Land M."/>
            <person name="Hauser L."/>
            <person name="Kyrpides N."/>
            <person name="Mikhailova N."/>
            <person name="Brumm P."/>
            <person name="Mead D.A."/>
            <person name="Richardson P."/>
        </authorList>
    </citation>
    <scope>NUCLEOTIDE SEQUENCE [LARGE SCALE GENOMIC DNA]</scope>
    <source>
        <strain>WCH70</strain>
    </source>
</reference>